<keyword id="KW-0378">Hydrolase</keyword>
<keyword id="KW-0460">Magnesium</keyword>
<keyword id="KW-0464">Manganese</keyword>
<keyword id="KW-0479">Metal-binding</keyword>
<keyword id="KW-1185">Reference proteome</keyword>
<gene>
    <name type="primary">ndx-7</name>
    <name type="ORF">C43E11.7</name>
</gene>
<organism>
    <name type="scientific">Caenorhabditis elegans</name>
    <dbReference type="NCBI Taxonomy" id="6239"/>
    <lineage>
        <taxon>Eukaryota</taxon>
        <taxon>Metazoa</taxon>
        <taxon>Ecdysozoa</taxon>
        <taxon>Nematoda</taxon>
        <taxon>Chromadorea</taxon>
        <taxon>Rhabditida</taxon>
        <taxon>Rhabditina</taxon>
        <taxon>Rhabditomorpha</taxon>
        <taxon>Rhabditoidea</taxon>
        <taxon>Rhabditidae</taxon>
        <taxon>Peloderinae</taxon>
        <taxon>Caenorhabditis</taxon>
    </lineage>
</organism>
<dbReference type="EC" id="3.6.1.-"/>
<dbReference type="EMBL" id="FO080612">
    <property type="protein sequence ID" value="CCD65159.1"/>
    <property type="molecule type" value="Genomic_DNA"/>
</dbReference>
<dbReference type="PIR" id="F87753">
    <property type="entry name" value="F87753"/>
</dbReference>
<dbReference type="RefSeq" id="NP_491336.2">
    <property type="nucleotide sequence ID" value="NM_058935.6"/>
</dbReference>
<dbReference type="SMR" id="P91148"/>
<dbReference type="BioGRID" id="48240">
    <property type="interactions" value="4"/>
</dbReference>
<dbReference type="FunCoup" id="P91148">
    <property type="interactions" value="639"/>
</dbReference>
<dbReference type="STRING" id="6239.C43E11.7.1"/>
<dbReference type="PaxDb" id="6239-C43E11.7"/>
<dbReference type="PeptideAtlas" id="P91148"/>
<dbReference type="EnsemblMetazoa" id="C43E11.7.1">
    <property type="protein sequence ID" value="C43E11.7.1"/>
    <property type="gene ID" value="WBGene00003584"/>
</dbReference>
<dbReference type="GeneID" id="183413"/>
<dbReference type="KEGG" id="cel:CELE_C43E11.7"/>
<dbReference type="UCSC" id="C43E11.7.1">
    <property type="organism name" value="c. elegans"/>
</dbReference>
<dbReference type="AGR" id="WB:WBGene00003584"/>
<dbReference type="CTD" id="183413"/>
<dbReference type="WormBase" id="C43E11.7">
    <property type="protein sequence ID" value="CE30504"/>
    <property type="gene ID" value="WBGene00003584"/>
    <property type="gene designation" value="ndx-7"/>
</dbReference>
<dbReference type="eggNOG" id="KOG3904">
    <property type="taxonomic scope" value="Eukaryota"/>
</dbReference>
<dbReference type="GeneTree" id="ENSGT00420000029858"/>
<dbReference type="HOGENOM" id="CLU_1062590_0_0_1"/>
<dbReference type="InParanoid" id="P91148"/>
<dbReference type="OMA" id="WSIWRTP"/>
<dbReference type="OrthoDB" id="1695362at2759"/>
<dbReference type="PhylomeDB" id="P91148"/>
<dbReference type="Reactome" id="R-CEL-390918">
    <property type="pathway name" value="Peroxisomal lipid metabolism"/>
</dbReference>
<dbReference type="Reactome" id="R-CEL-9033241">
    <property type="pathway name" value="Peroxisomal protein import"/>
</dbReference>
<dbReference type="PRO" id="PR:P91148"/>
<dbReference type="Proteomes" id="UP000001940">
    <property type="component" value="Chromosome I"/>
</dbReference>
<dbReference type="Bgee" id="WBGene00003584">
    <property type="expression patterns" value="Expressed in germ line (C elegans) and 4 other cell types or tissues"/>
</dbReference>
<dbReference type="GO" id="GO:0016818">
    <property type="term" value="F:hydrolase activity, acting on acid anhydrides, in phosphorus-containing anhydrides"/>
    <property type="evidence" value="ECO:0007669"/>
    <property type="project" value="InterPro"/>
</dbReference>
<dbReference type="GO" id="GO:0046872">
    <property type="term" value="F:metal ion binding"/>
    <property type="evidence" value="ECO:0007669"/>
    <property type="project" value="UniProtKB-KW"/>
</dbReference>
<dbReference type="CDD" id="cd18870">
    <property type="entry name" value="NUDIX_AcylCoAdiphos_Nudt19"/>
    <property type="match status" value="1"/>
</dbReference>
<dbReference type="Gene3D" id="3.90.79.10">
    <property type="entry name" value="Nucleoside Triphosphate Pyrophosphohydrolase"/>
    <property type="match status" value="1"/>
</dbReference>
<dbReference type="InterPro" id="IPR015797">
    <property type="entry name" value="NUDIX_hydrolase-like_dom_sf"/>
</dbReference>
<dbReference type="InterPro" id="IPR000086">
    <property type="entry name" value="NUDIX_hydrolase_dom"/>
</dbReference>
<dbReference type="InterPro" id="IPR039121">
    <property type="entry name" value="NUDT19"/>
</dbReference>
<dbReference type="PANTHER" id="PTHR12318:SF0">
    <property type="entry name" value="ACYL-COENZYME A DIPHOSPHATASE NUDT19"/>
    <property type="match status" value="1"/>
</dbReference>
<dbReference type="PANTHER" id="PTHR12318">
    <property type="entry name" value="TESTOSTERONE-REGULATED PROTEIN RP2"/>
    <property type="match status" value="1"/>
</dbReference>
<dbReference type="Pfam" id="PF00293">
    <property type="entry name" value="NUDIX"/>
    <property type="match status" value="1"/>
</dbReference>
<dbReference type="SUPFAM" id="SSF55811">
    <property type="entry name" value="Nudix"/>
    <property type="match status" value="1"/>
</dbReference>
<dbReference type="PROSITE" id="PS51462">
    <property type="entry name" value="NUDIX"/>
    <property type="match status" value="1"/>
</dbReference>
<protein>
    <recommendedName>
        <fullName>Putative nudix hydrolase 7</fullName>
        <ecNumber>3.6.1.-</ecNumber>
    </recommendedName>
</protein>
<reference key="1">
    <citation type="journal article" date="1998" name="Science">
        <title>Genome sequence of the nematode C. elegans: a platform for investigating biology.</title>
        <authorList>
            <consortium name="The C. elegans sequencing consortium"/>
        </authorList>
    </citation>
    <scope>NUCLEOTIDE SEQUENCE [LARGE SCALE GENOMIC DNA]</scope>
    <source>
        <strain>Bristol N2</strain>
    </source>
</reference>
<comment type="function">
    <text evidence="1">Probably mediates the hydrolysis of some nucleoside diphosphate derivatives.</text>
</comment>
<comment type="cofactor">
    <cofactor evidence="1">
        <name>Mg(2+)</name>
        <dbReference type="ChEBI" id="CHEBI:18420"/>
    </cofactor>
    <cofactor evidence="1">
        <name>Mn(2+)</name>
        <dbReference type="ChEBI" id="CHEBI:29035"/>
    </cofactor>
</comment>
<comment type="similarity">
    <text evidence="3">Belongs to the Nudix hydrolase family.</text>
</comment>
<sequence length="295" mass="33500">MCIGKVTSSWRSAASIILACKTTRRVLMLKRGTTAKFMPNTMVFPGGVVDKTDAKLGDEFRIAAVRELFEESGVLSTKNGWQTSANNPDMTSLKADIVNDTSKFEQLSGTICADNLIEWDTFITPANYPRRFLTKFYLMLVDDEPAIDLCTSEMSEYNWIEPKECVDEAYAGKYALPPPQVYELTRLSQVKDWDLCEKYGNVKKPICPQPIKTIGENLITNCFPGDYMYIDENSLQQPLRQMSADRVTVDPTQPTHRATYYSEPMYGKVRLYQHLLKPADIAAFHQFDTHSKDLL</sequence>
<evidence type="ECO:0000250" key="1"/>
<evidence type="ECO:0000255" key="2">
    <source>
        <dbReference type="PROSITE-ProRule" id="PRU00794"/>
    </source>
</evidence>
<evidence type="ECO:0000305" key="3"/>
<name>NDX7_CAEEL</name>
<feature type="chain" id="PRO_0000057137" description="Putative nudix hydrolase 7">
    <location>
        <begin position="1"/>
        <end position="295"/>
    </location>
</feature>
<feature type="domain" description="Nudix hydrolase" evidence="2">
    <location>
        <begin position="9"/>
        <end position="182"/>
    </location>
</feature>
<feature type="short sequence motif" description="Nudix box">
    <location>
        <begin position="52"/>
        <end position="73"/>
    </location>
</feature>
<feature type="binding site" evidence="1">
    <location>
        <position position="67"/>
    </location>
    <ligand>
        <name>Mg(2+)</name>
        <dbReference type="ChEBI" id="CHEBI:18420"/>
    </ligand>
</feature>
<feature type="binding site" evidence="1">
    <location>
        <position position="71"/>
    </location>
    <ligand>
        <name>Mg(2+)</name>
        <dbReference type="ChEBI" id="CHEBI:18420"/>
    </ligand>
</feature>
<proteinExistence type="inferred from homology"/>
<accession>P91148</accession>